<proteinExistence type="evidence at transcript level"/>
<comment type="function">
    <text evidence="1">Controls floral meristem identity. Is also required for normal development of sepals and petals. Is required for the transition of an influorescence meristem into a floral meristem. Interacts with LEAFY (By similarity).</text>
</comment>
<comment type="subcellular location">
    <subcellularLocation>
        <location evidence="2">Nucleus</location>
    </subcellularLocation>
</comment>
<evidence type="ECO:0000250" key="1"/>
<evidence type="ECO:0000255" key="2">
    <source>
        <dbReference type="PROSITE-ProRule" id="PRU00251"/>
    </source>
</evidence>
<evidence type="ECO:0000255" key="3">
    <source>
        <dbReference type="PROSITE-ProRule" id="PRU00629"/>
    </source>
</evidence>
<keyword id="KW-0010">Activator</keyword>
<keyword id="KW-0217">Developmental protein</keyword>
<keyword id="KW-0238">DNA-binding</keyword>
<keyword id="KW-0539">Nucleus</keyword>
<keyword id="KW-0804">Transcription</keyword>
<keyword id="KW-0805">Transcription regulation</keyword>
<reference key="1">
    <citation type="journal article" date="1995" name="Plant Physiol.">
        <title>Isolation and analysis of SaMADS C, the APETALA 1 cDNA homolog from mustard.</title>
        <authorList>
            <person name="Menzel G."/>
            <person name="Apel K."/>
            <person name="Melzer S."/>
        </authorList>
    </citation>
    <scope>NUCLEOTIDE SEQUENCE [MRNA]</scope>
    <source>
        <tissue>Flower</tissue>
    </source>
</reference>
<protein>
    <recommendedName>
        <fullName>Floral homeotic protein APETALA 1</fullName>
    </recommendedName>
    <alternativeName>
        <fullName>MADS C</fullName>
    </alternativeName>
</protein>
<sequence length="254" mass="29918">MGRGRVQLKRIENKINRQVTFSKRRAGLLKKAHEISVLCDAEVALVVFSHKGKLFEYSTDSCMEKILERYERYSYAERQLIAPESDVNTNWSMEYNRLKAKIELLERNQRHYLGEDLQAMSSKELQNLEQQLDTALKHIRSRKNQLMHDSINELQRKEKAIQEQNSMLSKQIKEREKILRAQQEQWDQQNHGHNMPPPPPPQQIQHPYMLSHQPSPFLNMGGLYQEEDPMEMRRNDLDLSLEPVYNCNLGCFAA</sequence>
<gene>
    <name type="primary">AP1</name>
</gene>
<accession>Q41276</accession>
<dbReference type="EMBL" id="X81480">
    <property type="protein sequence ID" value="CAA57233.1"/>
    <property type="molecule type" value="mRNA"/>
</dbReference>
<dbReference type="PIR" id="S52236">
    <property type="entry name" value="S52236"/>
</dbReference>
<dbReference type="SMR" id="Q41276"/>
<dbReference type="GO" id="GO:0005634">
    <property type="term" value="C:nucleus"/>
    <property type="evidence" value="ECO:0007669"/>
    <property type="project" value="UniProtKB-SubCell"/>
</dbReference>
<dbReference type="GO" id="GO:0003700">
    <property type="term" value="F:DNA-binding transcription factor activity"/>
    <property type="evidence" value="ECO:0007669"/>
    <property type="project" value="InterPro"/>
</dbReference>
<dbReference type="GO" id="GO:0046983">
    <property type="term" value="F:protein dimerization activity"/>
    <property type="evidence" value="ECO:0007669"/>
    <property type="project" value="InterPro"/>
</dbReference>
<dbReference type="GO" id="GO:0000977">
    <property type="term" value="F:RNA polymerase II transcription regulatory region sequence-specific DNA binding"/>
    <property type="evidence" value="ECO:0007669"/>
    <property type="project" value="InterPro"/>
</dbReference>
<dbReference type="GO" id="GO:0045944">
    <property type="term" value="P:positive regulation of transcription by RNA polymerase II"/>
    <property type="evidence" value="ECO:0007669"/>
    <property type="project" value="InterPro"/>
</dbReference>
<dbReference type="CDD" id="cd00265">
    <property type="entry name" value="MADS_MEF2_like"/>
    <property type="match status" value="1"/>
</dbReference>
<dbReference type="FunFam" id="3.40.1810.10:FF:000003">
    <property type="entry name" value="MADS-box transcription factor MADS-MC"/>
    <property type="match status" value="1"/>
</dbReference>
<dbReference type="Gene3D" id="3.40.1810.10">
    <property type="entry name" value="Transcription factor, MADS-box"/>
    <property type="match status" value="1"/>
</dbReference>
<dbReference type="InterPro" id="IPR050142">
    <property type="entry name" value="MADS-box/MEF2_TF"/>
</dbReference>
<dbReference type="InterPro" id="IPR033896">
    <property type="entry name" value="MEF2-like_N"/>
</dbReference>
<dbReference type="InterPro" id="IPR002487">
    <property type="entry name" value="TF_Kbox"/>
</dbReference>
<dbReference type="InterPro" id="IPR002100">
    <property type="entry name" value="TF_MADSbox"/>
</dbReference>
<dbReference type="InterPro" id="IPR036879">
    <property type="entry name" value="TF_MADSbox_sf"/>
</dbReference>
<dbReference type="PANTHER" id="PTHR48019">
    <property type="entry name" value="SERUM RESPONSE FACTOR HOMOLOG"/>
    <property type="match status" value="1"/>
</dbReference>
<dbReference type="Pfam" id="PF01486">
    <property type="entry name" value="K-box"/>
    <property type="match status" value="1"/>
</dbReference>
<dbReference type="Pfam" id="PF00319">
    <property type="entry name" value="SRF-TF"/>
    <property type="match status" value="1"/>
</dbReference>
<dbReference type="PRINTS" id="PR00404">
    <property type="entry name" value="MADSDOMAIN"/>
</dbReference>
<dbReference type="SMART" id="SM00432">
    <property type="entry name" value="MADS"/>
    <property type="match status" value="1"/>
</dbReference>
<dbReference type="SUPFAM" id="SSF55455">
    <property type="entry name" value="SRF-like"/>
    <property type="match status" value="1"/>
</dbReference>
<dbReference type="PROSITE" id="PS51297">
    <property type="entry name" value="K_BOX"/>
    <property type="match status" value="1"/>
</dbReference>
<dbReference type="PROSITE" id="PS00350">
    <property type="entry name" value="MADS_BOX_1"/>
    <property type="match status" value="1"/>
</dbReference>
<dbReference type="PROSITE" id="PS50066">
    <property type="entry name" value="MADS_BOX_2"/>
    <property type="match status" value="1"/>
</dbReference>
<organism>
    <name type="scientific">Sinapis alba</name>
    <name type="common">White mustard</name>
    <name type="synonym">Brassica hirta</name>
    <dbReference type="NCBI Taxonomy" id="3728"/>
    <lineage>
        <taxon>Eukaryota</taxon>
        <taxon>Viridiplantae</taxon>
        <taxon>Streptophyta</taxon>
        <taxon>Embryophyta</taxon>
        <taxon>Tracheophyta</taxon>
        <taxon>Spermatophyta</taxon>
        <taxon>Magnoliopsida</taxon>
        <taxon>eudicotyledons</taxon>
        <taxon>Gunneridae</taxon>
        <taxon>Pentapetalae</taxon>
        <taxon>rosids</taxon>
        <taxon>malvids</taxon>
        <taxon>Brassicales</taxon>
        <taxon>Brassicaceae</taxon>
        <taxon>Brassiceae</taxon>
        <taxon>Sinapis</taxon>
    </lineage>
</organism>
<feature type="chain" id="PRO_0000199452" description="Floral homeotic protein APETALA 1">
    <location>
        <begin position="1"/>
        <end position="254"/>
    </location>
</feature>
<feature type="domain" description="MADS-box" evidence="2">
    <location>
        <begin position="3"/>
        <end position="57"/>
    </location>
</feature>
<feature type="domain" description="K-box" evidence="3">
    <location>
        <begin position="88"/>
        <end position="178"/>
    </location>
</feature>
<name>AP1_SINAL</name>